<proteinExistence type="evidence at transcript level"/>
<reference key="1">
    <citation type="submission" date="2004-11" db="EMBL/GenBank/DDBJ databases">
        <authorList>
            <consortium name="The German cDNA consortium"/>
        </authorList>
    </citation>
    <scope>NUCLEOTIDE SEQUENCE [LARGE SCALE MRNA]</scope>
    <source>
        <tissue>Brain cortex</tissue>
    </source>
</reference>
<dbReference type="EMBL" id="CR858092">
    <property type="protein sequence ID" value="CAH90331.1"/>
    <property type="molecule type" value="mRNA"/>
</dbReference>
<dbReference type="RefSeq" id="NP_001125156.1">
    <property type="nucleotide sequence ID" value="NM_001131684.1"/>
</dbReference>
<dbReference type="RefSeq" id="XP_009233316.1">
    <property type="nucleotide sequence ID" value="XM_009235041.3"/>
</dbReference>
<dbReference type="RefSeq" id="XP_054399975.1">
    <property type="nucleotide sequence ID" value="XM_054544000.2"/>
</dbReference>
<dbReference type="RefSeq" id="XP_054399976.1">
    <property type="nucleotide sequence ID" value="XM_054544001.2"/>
</dbReference>
<dbReference type="SMR" id="Q5RD26"/>
<dbReference type="FunCoup" id="Q5RD26">
    <property type="interactions" value="3572"/>
</dbReference>
<dbReference type="STRING" id="9601.ENSPPYP00000023008"/>
<dbReference type="Ensembl" id="ENSPPYT00000023976.2">
    <property type="protein sequence ID" value="ENSPPYP00000023008.1"/>
    <property type="gene ID" value="ENSPPYG00000020553.2"/>
</dbReference>
<dbReference type="Ensembl" id="ENSPPYT00000038968.1">
    <property type="protein sequence ID" value="ENSPPYP00000045041.1"/>
    <property type="gene ID" value="ENSPPYG00000020553.2"/>
</dbReference>
<dbReference type="GeneID" id="100172043"/>
<dbReference type="KEGG" id="pon:100172043"/>
<dbReference type="CTD" id="3188"/>
<dbReference type="eggNOG" id="KOG4211">
    <property type="taxonomic scope" value="Eukaryota"/>
</dbReference>
<dbReference type="GeneTree" id="ENSGT00940000153503"/>
<dbReference type="HOGENOM" id="CLU_032003_1_0_1"/>
<dbReference type="InParanoid" id="Q5RD26"/>
<dbReference type="OMA" id="YSCTEDQ"/>
<dbReference type="OrthoDB" id="431068at2759"/>
<dbReference type="TreeFam" id="TF316157"/>
<dbReference type="Proteomes" id="UP000001595">
    <property type="component" value="Chromosome X"/>
</dbReference>
<dbReference type="GO" id="GO:0005829">
    <property type="term" value="C:cytosol"/>
    <property type="evidence" value="ECO:0007669"/>
    <property type="project" value="Ensembl"/>
</dbReference>
<dbReference type="GO" id="GO:0005654">
    <property type="term" value="C:nucleoplasm"/>
    <property type="evidence" value="ECO:0000250"/>
    <property type="project" value="UniProtKB"/>
</dbReference>
<dbReference type="GO" id="GO:1990904">
    <property type="term" value="C:ribonucleoprotein complex"/>
    <property type="evidence" value="ECO:0007669"/>
    <property type="project" value="UniProtKB-KW"/>
</dbReference>
<dbReference type="GO" id="GO:0003723">
    <property type="term" value="F:RNA binding"/>
    <property type="evidence" value="ECO:0007669"/>
    <property type="project" value="UniProtKB-KW"/>
</dbReference>
<dbReference type="CDD" id="cd12729">
    <property type="entry name" value="RRM1_hnRNPH_hnRNPH2_hnRNPF"/>
    <property type="match status" value="1"/>
</dbReference>
<dbReference type="CDD" id="cd12731">
    <property type="entry name" value="RRM2_hnRNPH_hnRNPH2_hnRNPF"/>
    <property type="match status" value="1"/>
</dbReference>
<dbReference type="CDD" id="cd12734">
    <property type="entry name" value="RRM3_hnRNPH_hnRNPH2_hnRNPF"/>
    <property type="match status" value="1"/>
</dbReference>
<dbReference type="FunFam" id="3.30.70.330:FF:000071">
    <property type="entry name" value="heterogeneous nuclear ribonucleoprotein H isoform X1"/>
    <property type="match status" value="1"/>
</dbReference>
<dbReference type="FunFam" id="3.30.70.330:FF:000075">
    <property type="entry name" value="Heterogeneous nuclear ribonucleoprotein H1 (H)"/>
    <property type="match status" value="1"/>
</dbReference>
<dbReference type="FunFam" id="3.30.70.330:FF:000031">
    <property type="entry name" value="Heterogeneous nuclear ribonucleoprotein h3 isoform"/>
    <property type="match status" value="1"/>
</dbReference>
<dbReference type="Gene3D" id="3.30.70.330">
    <property type="match status" value="3"/>
</dbReference>
<dbReference type="InterPro" id="IPR050666">
    <property type="entry name" value="ESRP"/>
</dbReference>
<dbReference type="InterPro" id="IPR012677">
    <property type="entry name" value="Nucleotide-bd_a/b_plait_sf"/>
</dbReference>
<dbReference type="InterPro" id="IPR035979">
    <property type="entry name" value="RBD_domain_sf"/>
</dbReference>
<dbReference type="InterPro" id="IPR000504">
    <property type="entry name" value="RRM_dom"/>
</dbReference>
<dbReference type="InterPro" id="IPR012996">
    <property type="entry name" value="Znf_CHHC"/>
</dbReference>
<dbReference type="PANTHER" id="PTHR13976">
    <property type="entry name" value="HETEROGENEOUS NUCLEAR RIBONUCLEOPROTEIN-RELATED"/>
    <property type="match status" value="1"/>
</dbReference>
<dbReference type="Pfam" id="PF00076">
    <property type="entry name" value="RRM_1"/>
    <property type="match status" value="3"/>
</dbReference>
<dbReference type="Pfam" id="PF08080">
    <property type="entry name" value="zf-RNPHF"/>
    <property type="match status" value="1"/>
</dbReference>
<dbReference type="SMART" id="SM00360">
    <property type="entry name" value="RRM"/>
    <property type="match status" value="3"/>
</dbReference>
<dbReference type="SUPFAM" id="SSF54928">
    <property type="entry name" value="RNA-binding domain, RBD"/>
    <property type="match status" value="3"/>
</dbReference>
<dbReference type="PROSITE" id="PS50102">
    <property type="entry name" value="RRM"/>
    <property type="match status" value="3"/>
</dbReference>
<accession>Q5RD26</accession>
<organism>
    <name type="scientific">Pongo abelii</name>
    <name type="common">Sumatran orangutan</name>
    <name type="synonym">Pongo pygmaeus abelii</name>
    <dbReference type="NCBI Taxonomy" id="9601"/>
    <lineage>
        <taxon>Eukaryota</taxon>
        <taxon>Metazoa</taxon>
        <taxon>Chordata</taxon>
        <taxon>Craniata</taxon>
        <taxon>Vertebrata</taxon>
        <taxon>Euteleostomi</taxon>
        <taxon>Mammalia</taxon>
        <taxon>Eutheria</taxon>
        <taxon>Euarchontoglires</taxon>
        <taxon>Primates</taxon>
        <taxon>Haplorrhini</taxon>
        <taxon>Catarrhini</taxon>
        <taxon>Hominidae</taxon>
        <taxon>Pongo</taxon>
    </lineage>
</organism>
<protein>
    <recommendedName>
        <fullName>Heterogeneous nuclear ribonucleoprotein H2</fullName>
        <shortName>hnRNP H2</shortName>
    </recommendedName>
    <alternativeName>
        <fullName>Heterogeneous nuclear ribonucleoprotein H'</fullName>
        <shortName>hnRNP H'</shortName>
    </alternativeName>
    <component>
        <recommendedName>
            <fullName>Heterogeneous nuclear ribonucleoprotein H2, N-terminally processed</fullName>
        </recommendedName>
    </component>
</protein>
<sequence>MMLSTEGREGFVVKVRGLPWSCSADEVMRFFSDCKIQNGTSGIRFIYTREGRPSGEAFVELESEEEVKLALKKDRETMGHRYVEVFKSNSVEMDWVLKHTGPNSPDTANDGFVRLRGLPFGCSKEEIVQFFSGLEIVPNGMTLPVDFQGRSTGEAFVQFASQEIAEKALKKHKERIGHRYIEIFKSSRAEVRTHYDPPRKLMAMQRPGPYDRPGAGRGYNSIGRGAGFERMRRGAYGGGYGGYDDYGGYNDGYGFGSDRFGRDLNYCFSGMSDHRYGDGGSSFQSTTGHCVHMRGLPYRATENDIYNFFSPLNPMRVHIEIGPDGRVTGEADVEFATHEDAVAAMAKDKANMQHRYVELFLNSTAGTSGGAYDHSYVELFLNSTAGASGGAYGSQMMGGMGLSNQSSYGGPASQQLSGGYGGGYGGQSSMSGYDQVLQENSSDYQSNLA</sequence>
<keyword id="KW-0007">Acetylation</keyword>
<keyword id="KW-1017">Isopeptide bond</keyword>
<keyword id="KW-0488">Methylation</keyword>
<keyword id="KW-0539">Nucleus</keyword>
<keyword id="KW-0597">Phosphoprotein</keyword>
<keyword id="KW-1185">Reference proteome</keyword>
<keyword id="KW-0677">Repeat</keyword>
<keyword id="KW-0687">Ribonucleoprotein</keyword>
<keyword id="KW-0694">RNA-binding</keyword>
<keyword id="KW-0832">Ubl conjugation</keyword>
<gene>
    <name type="primary">HNRNPH2</name>
    <name type="synonym">HNRPH2</name>
</gene>
<name>HNRH2_PONAB</name>
<comment type="function">
    <text evidence="1">This protein is a component of the heterogeneous nuclear ribonucleoprotein (hnRNP) complexes which provide the substrate for the processing events that pre-mRNAs undergo before becoming functional, translatable mRNAs in the cytoplasm. Binds poly(RG) (By similarity).</text>
</comment>
<comment type="subunit">
    <text evidence="3">Component of a ribonucleoprotein complex containing mRNAs and RNA-binding proteins including DDX5, HNRNPH2 and SRSF1 as well as splicing regulator ARVCF. Interacts with TXNL4/DIM1.</text>
</comment>
<comment type="subcellular location">
    <subcellularLocation>
        <location evidence="3">Nucleus</location>
        <location evidence="3">Nucleoplasm</location>
    </subcellularLocation>
</comment>
<evidence type="ECO:0000250" key="1"/>
<evidence type="ECO:0000250" key="2">
    <source>
        <dbReference type="UniProtKB" id="P31943"/>
    </source>
</evidence>
<evidence type="ECO:0000250" key="3">
    <source>
        <dbReference type="UniProtKB" id="P55795"/>
    </source>
</evidence>
<evidence type="ECO:0000250" key="4">
    <source>
        <dbReference type="UniProtKB" id="P70333"/>
    </source>
</evidence>
<evidence type="ECO:0000255" key="5">
    <source>
        <dbReference type="PROSITE-ProRule" id="PRU00176"/>
    </source>
</evidence>
<feature type="chain" id="PRO_0000434387" description="Heterogeneous nuclear ribonucleoprotein H2">
    <location>
        <begin position="1"/>
        <end position="449"/>
    </location>
</feature>
<feature type="initiator methionine" description="Removed; alternate" evidence="2">
    <location>
        <position position="1"/>
    </location>
</feature>
<feature type="chain" id="PRO_0000307371" description="Heterogeneous nuclear ribonucleoprotein H2, N-terminally processed">
    <location>
        <begin position="2"/>
        <end position="449"/>
    </location>
</feature>
<feature type="domain" description="RRM 1" evidence="5">
    <location>
        <begin position="11"/>
        <end position="90"/>
    </location>
</feature>
<feature type="domain" description="RRM 2" evidence="5">
    <location>
        <begin position="111"/>
        <end position="188"/>
    </location>
</feature>
<feature type="repeat" description="1-1">
    <location>
        <begin position="234"/>
        <end position="249"/>
    </location>
</feature>
<feature type="domain" description="RRM 3" evidence="5">
    <location>
        <begin position="289"/>
        <end position="364"/>
    </location>
</feature>
<feature type="repeat" description="2-1">
    <location>
        <begin position="354"/>
        <end position="372"/>
    </location>
</feature>
<feature type="repeat" description="2-2">
    <location>
        <begin position="374"/>
        <end position="392"/>
    </location>
</feature>
<feature type="repeat" description="1-2">
    <location>
        <begin position="418"/>
        <end position="433"/>
    </location>
</feature>
<feature type="region of interest" description="2 X 16 AA Gly-rich approximate repeats">
    <location>
        <begin position="234"/>
        <end position="433"/>
    </location>
</feature>
<feature type="region of interest" description="2 X 19 AA perfect repeats">
    <location>
        <begin position="354"/>
        <end position="392"/>
    </location>
</feature>
<feature type="modified residue" description="N-acetylmethionine" evidence="2">
    <location>
        <position position="1"/>
    </location>
</feature>
<feature type="modified residue" description="N-acetylmethionine; in Heterogeneous nuclear ribonucleoprotein H2, N-terminally processed" evidence="2">
    <location>
        <position position="2"/>
    </location>
</feature>
<feature type="modified residue" description="Phosphoserine" evidence="2">
    <location>
        <position position="23"/>
    </location>
</feature>
<feature type="modified residue" description="Phosphoserine" evidence="2">
    <location>
        <position position="54"/>
    </location>
</feature>
<feature type="modified residue" description="Phosphoserine" evidence="2">
    <location>
        <position position="63"/>
    </location>
</feature>
<feature type="modified residue" description="Phosphoserine" evidence="4">
    <location>
        <position position="90"/>
    </location>
</feature>
<feature type="modified residue" description="Dimethylated arginine; alternate" evidence="2">
    <location>
        <position position="233"/>
    </location>
</feature>
<feature type="modified residue" description="Omega-N-methylarginine; alternate" evidence="3">
    <location>
        <position position="233"/>
    </location>
</feature>
<feature type="modified residue" description="Phosphotyrosine" evidence="2">
    <location>
        <position position="246"/>
    </location>
</feature>
<feature type="modified residue" description="Phosphoserine" evidence="3">
    <location>
        <position position="310"/>
    </location>
</feature>
<feature type="cross-link" description="Glycyl lysine isopeptide (Lys-Gly) (interchain with G-Cter in SUMO2)" evidence="3">
    <location>
        <position position="35"/>
    </location>
</feature>
<feature type="cross-link" description="Glycyl lysine isopeptide (Lys-Gly) (interchain with G-Cter in SUMO2)" evidence="2">
    <location>
        <position position="87"/>
    </location>
</feature>
<feature type="cross-link" description="Glycyl lysine isopeptide (Lys-Gly) (interchain with G-Cter in SUMO2)" evidence="2">
    <location>
        <position position="98"/>
    </location>
</feature>